<comment type="function">
    <text evidence="1">Catalyzes the attachment of tyrosine to tRNA(Tyr) in a two-step reaction: tyrosine is first activated by ATP to form Tyr-AMP and then transferred to the acceptor end of tRNA(Tyr).</text>
</comment>
<comment type="catalytic activity">
    <reaction evidence="1">
        <text>tRNA(Tyr) + L-tyrosine + ATP = L-tyrosyl-tRNA(Tyr) + AMP + diphosphate + H(+)</text>
        <dbReference type="Rhea" id="RHEA:10220"/>
        <dbReference type="Rhea" id="RHEA-COMP:9706"/>
        <dbReference type="Rhea" id="RHEA-COMP:9707"/>
        <dbReference type="ChEBI" id="CHEBI:15378"/>
        <dbReference type="ChEBI" id="CHEBI:30616"/>
        <dbReference type="ChEBI" id="CHEBI:33019"/>
        <dbReference type="ChEBI" id="CHEBI:58315"/>
        <dbReference type="ChEBI" id="CHEBI:78442"/>
        <dbReference type="ChEBI" id="CHEBI:78536"/>
        <dbReference type="ChEBI" id="CHEBI:456215"/>
        <dbReference type="EC" id="6.1.1.1"/>
    </reaction>
</comment>
<comment type="subunit">
    <text evidence="1">Homodimer.</text>
</comment>
<comment type="subcellular location">
    <subcellularLocation>
        <location evidence="1">Cytoplasm</location>
    </subcellularLocation>
</comment>
<comment type="similarity">
    <text evidence="1">Belongs to the class-I aminoacyl-tRNA synthetase family. TyrS type 1 subfamily.</text>
</comment>
<sequence>MPNAPEVNSVWDELLWRGLVCVSTDQGALKELLDGPPIRFYCGFDPTAPSLHVGNLAQILIMRRLQLAGHRPIALVGGSTGLIGDPRPGGERQLHSHEQVQEWVRALQQQLSRFLDFKGAAAAVLVNNLDWTKSLTALDFLRELGKHFRVNAMLKKDAVAARLSSTEGISYTEFSYQILQSLDFRQLYLDYKCVLQIGGSDQWGNITSGVDLIRKTEGAGVHAFGSPLLTASDGSKFGKTEGNAIWLDADLTSPWSFYQFFLNSDDADIPRLLRVFTFFTRSEIEDLNRSVRENASARLAHRHLAYSVTRLVHGADVADQVLLACSVLFGDGGALGKTQTGLPRIDSDTLNDSSGVTTIKAQDNTYTPYSPEGVRFAGTFPVDPRFLRSILFELPNATVSAHDLITHILQKVGLCRSLSEARRLISQGGIYVNNIKVTCPDALLDSFLDNSMPIRAAILRKGKKHLAAVFY</sequence>
<dbReference type="EC" id="6.1.1.1" evidence="1"/>
<dbReference type="EMBL" id="AE014184">
    <property type="protein sequence ID" value="AAO44266.1"/>
    <property type="molecule type" value="Genomic_DNA"/>
</dbReference>
<dbReference type="RefSeq" id="WP_011096548.1">
    <property type="nucleotide sequence ID" value="NC_004572.3"/>
</dbReference>
<dbReference type="SMR" id="Q83GS7"/>
<dbReference type="STRING" id="203267.TWT_169"/>
<dbReference type="GeneID" id="67388385"/>
<dbReference type="KEGG" id="twh:TWT_169"/>
<dbReference type="eggNOG" id="COG0162">
    <property type="taxonomic scope" value="Bacteria"/>
</dbReference>
<dbReference type="HOGENOM" id="CLU_024003_0_3_11"/>
<dbReference type="OrthoDB" id="9804243at2"/>
<dbReference type="Proteomes" id="UP000002200">
    <property type="component" value="Chromosome"/>
</dbReference>
<dbReference type="GO" id="GO:0005829">
    <property type="term" value="C:cytosol"/>
    <property type="evidence" value="ECO:0007669"/>
    <property type="project" value="TreeGrafter"/>
</dbReference>
<dbReference type="GO" id="GO:0005524">
    <property type="term" value="F:ATP binding"/>
    <property type="evidence" value="ECO:0007669"/>
    <property type="project" value="UniProtKB-UniRule"/>
</dbReference>
<dbReference type="GO" id="GO:0003723">
    <property type="term" value="F:RNA binding"/>
    <property type="evidence" value="ECO:0007669"/>
    <property type="project" value="UniProtKB-KW"/>
</dbReference>
<dbReference type="GO" id="GO:0004831">
    <property type="term" value="F:tyrosine-tRNA ligase activity"/>
    <property type="evidence" value="ECO:0007669"/>
    <property type="project" value="UniProtKB-UniRule"/>
</dbReference>
<dbReference type="GO" id="GO:0006437">
    <property type="term" value="P:tyrosyl-tRNA aminoacylation"/>
    <property type="evidence" value="ECO:0007669"/>
    <property type="project" value="UniProtKB-UniRule"/>
</dbReference>
<dbReference type="CDD" id="cd00165">
    <property type="entry name" value="S4"/>
    <property type="match status" value="1"/>
</dbReference>
<dbReference type="CDD" id="cd00805">
    <property type="entry name" value="TyrRS_core"/>
    <property type="match status" value="1"/>
</dbReference>
<dbReference type="FunFam" id="1.10.240.10:FF:000001">
    <property type="entry name" value="Tyrosine--tRNA ligase"/>
    <property type="match status" value="1"/>
</dbReference>
<dbReference type="Gene3D" id="3.40.50.620">
    <property type="entry name" value="HUPs"/>
    <property type="match status" value="1"/>
</dbReference>
<dbReference type="Gene3D" id="3.10.290.10">
    <property type="entry name" value="RNA-binding S4 domain"/>
    <property type="match status" value="1"/>
</dbReference>
<dbReference type="Gene3D" id="1.10.240.10">
    <property type="entry name" value="Tyrosyl-Transfer RNA Synthetase"/>
    <property type="match status" value="1"/>
</dbReference>
<dbReference type="HAMAP" id="MF_02006">
    <property type="entry name" value="Tyr_tRNA_synth_type1"/>
    <property type="match status" value="1"/>
</dbReference>
<dbReference type="InterPro" id="IPR001412">
    <property type="entry name" value="aa-tRNA-synth_I_CS"/>
</dbReference>
<dbReference type="InterPro" id="IPR002305">
    <property type="entry name" value="aa-tRNA-synth_Ic"/>
</dbReference>
<dbReference type="InterPro" id="IPR014729">
    <property type="entry name" value="Rossmann-like_a/b/a_fold"/>
</dbReference>
<dbReference type="InterPro" id="IPR036986">
    <property type="entry name" value="S4_RNA-bd_sf"/>
</dbReference>
<dbReference type="InterPro" id="IPR054608">
    <property type="entry name" value="SYY-like_C"/>
</dbReference>
<dbReference type="InterPro" id="IPR002307">
    <property type="entry name" value="Tyr-tRNA-ligase"/>
</dbReference>
<dbReference type="InterPro" id="IPR024088">
    <property type="entry name" value="Tyr-tRNA-ligase_bac-type"/>
</dbReference>
<dbReference type="InterPro" id="IPR024107">
    <property type="entry name" value="Tyr-tRNA-ligase_bac_1"/>
</dbReference>
<dbReference type="NCBIfam" id="TIGR00234">
    <property type="entry name" value="tyrS"/>
    <property type="match status" value="1"/>
</dbReference>
<dbReference type="PANTHER" id="PTHR11766:SF0">
    <property type="entry name" value="TYROSINE--TRNA LIGASE, MITOCHONDRIAL"/>
    <property type="match status" value="1"/>
</dbReference>
<dbReference type="PANTHER" id="PTHR11766">
    <property type="entry name" value="TYROSYL-TRNA SYNTHETASE"/>
    <property type="match status" value="1"/>
</dbReference>
<dbReference type="Pfam" id="PF22421">
    <property type="entry name" value="SYY_C-terminal"/>
    <property type="match status" value="1"/>
</dbReference>
<dbReference type="Pfam" id="PF00579">
    <property type="entry name" value="tRNA-synt_1b"/>
    <property type="match status" value="1"/>
</dbReference>
<dbReference type="PRINTS" id="PR01040">
    <property type="entry name" value="TRNASYNTHTYR"/>
</dbReference>
<dbReference type="SUPFAM" id="SSF55174">
    <property type="entry name" value="Alpha-L RNA-binding motif"/>
    <property type="match status" value="1"/>
</dbReference>
<dbReference type="SUPFAM" id="SSF52374">
    <property type="entry name" value="Nucleotidylyl transferase"/>
    <property type="match status" value="1"/>
</dbReference>
<dbReference type="PROSITE" id="PS00178">
    <property type="entry name" value="AA_TRNA_LIGASE_I"/>
    <property type="match status" value="1"/>
</dbReference>
<dbReference type="PROSITE" id="PS50889">
    <property type="entry name" value="S4"/>
    <property type="match status" value="1"/>
</dbReference>
<proteinExistence type="inferred from homology"/>
<organism>
    <name type="scientific">Tropheryma whipplei (strain Twist)</name>
    <name type="common">Whipple's bacillus</name>
    <dbReference type="NCBI Taxonomy" id="203267"/>
    <lineage>
        <taxon>Bacteria</taxon>
        <taxon>Bacillati</taxon>
        <taxon>Actinomycetota</taxon>
        <taxon>Actinomycetes</taxon>
        <taxon>Micrococcales</taxon>
        <taxon>Tropherymataceae</taxon>
        <taxon>Tropheryma</taxon>
    </lineage>
</organism>
<evidence type="ECO:0000255" key="1">
    <source>
        <dbReference type="HAMAP-Rule" id="MF_02006"/>
    </source>
</evidence>
<protein>
    <recommendedName>
        <fullName evidence="1">Tyrosine--tRNA ligase</fullName>
        <ecNumber evidence="1">6.1.1.1</ecNumber>
    </recommendedName>
    <alternativeName>
        <fullName evidence="1">Tyrosyl-tRNA synthetase</fullName>
        <shortName evidence="1">TyrRS</shortName>
    </alternativeName>
</protein>
<reference key="1">
    <citation type="journal article" date="2003" name="Genome Res.">
        <title>Tropheryma whipplei twist: a human pathogenic Actinobacteria with a reduced genome.</title>
        <authorList>
            <person name="Raoult D."/>
            <person name="Ogata H."/>
            <person name="Audic S."/>
            <person name="Robert C."/>
            <person name="Suhre K."/>
            <person name="Drancourt M."/>
            <person name="Claverie J.-M."/>
        </authorList>
    </citation>
    <scope>NUCLEOTIDE SEQUENCE [LARGE SCALE GENOMIC DNA]</scope>
    <source>
        <strain>Twist</strain>
    </source>
</reference>
<keyword id="KW-0030">Aminoacyl-tRNA synthetase</keyword>
<keyword id="KW-0067">ATP-binding</keyword>
<keyword id="KW-0963">Cytoplasm</keyword>
<keyword id="KW-0436">Ligase</keyword>
<keyword id="KW-0547">Nucleotide-binding</keyword>
<keyword id="KW-0648">Protein biosynthesis</keyword>
<keyword id="KW-1185">Reference proteome</keyword>
<keyword id="KW-0694">RNA-binding</keyword>
<gene>
    <name evidence="1" type="primary">tyrS</name>
    <name type="ordered locus">TWT_169</name>
</gene>
<feature type="chain" id="PRO_0000234806" description="Tyrosine--tRNA ligase">
    <location>
        <begin position="1"/>
        <end position="471"/>
    </location>
</feature>
<feature type="domain" description="S4 RNA-binding" evidence="1">
    <location>
        <begin position="403"/>
        <end position="471"/>
    </location>
</feature>
<feature type="short sequence motif" description="'HIGH' region">
    <location>
        <begin position="46"/>
        <end position="55"/>
    </location>
</feature>
<feature type="short sequence motif" description="'KMSKS' region">
    <location>
        <begin position="236"/>
        <end position="240"/>
    </location>
</feature>
<feature type="binding site" evidence="1">
    <location>
        <position position="41"/>
    </location>
    <ligand>
        <name>L-tyrosine</name>
        <dbReference type="ChEBI" id="CHEBI:58315"/>
    </ligand>
</feature>
<feature type="binding site" evidence="1">
    <location>
        <position position="176"/>
    </location>
    <ligand>
        <name>L-tyrosine</name>
        <dbReference type="ChEBI" id="CHEBI:58315"/>
    </ligand>
</feature>
<feature type="binding site" evidence="1">
    <location>
        <position position="180"/>
    </location>
    <ligand>
        <name>L-tyrosine</name>
        <dbReference type="ChEBI" id="CHEBI:58315"/>
    </ligand>
</feature>
<feature type="binding site" evidence="1">
    <location>
        <position position="239"/>
    </location>
    <ligand>
        <name>ATP</name>
        <dbReference type="ChEBI" id="CHEBI:30616"/>
    </ligand>
</feature>
<accession>Q83GS7</accession>
<name>SYY_TROWT</name>